<reference key="1">
    <citation type="submission" date="2009-01" db="EMBL/GenBank/DDBJ databases">
        <title>Complete sequence of chromosome of Arthrobacter chlorophenolicus A6.</title>
        <authorList>
            <consortium name="US DOE Joint Genome Institute"/>
            <person name="Lucas S."/>
            <person name="Copeland A."/>
            <person name="Lapidus A."/>
            <person name="Glavina del Rio T."/>
            <person name="Tice H."/>
            <person name="Bruce D."/>
            <person name="Goodwin L."/>
            <person name="Pitluck S."/>
            <person name="Goltsman E."/>
            <person name="Clum A."/>
            <person name="Larimer F."/>
            <person name="Land M."/>
            <person name="Hauser L."/>
            <person name="Kyrpides N."/>
            <person name="Mikhailova N."/>
            <person name="Jansson J."/>
            <person name="Richardson P."/>
        </authorList>
    </citation>
    <scope>NUCLEOTIDE SEQUENCE [LARGE SCALE GENOMIC DNA]</scope>
    <source>
        <strain>ATCC 700700 / DSM 12829 / CIP 107037 / JCM 12360 / KCTC 9906 / NCIMB 13794 / A6</strain>
    </source>
</reference>
<accession>B8HG97</accession>
<proteinExistence type="inferred from homology"/>
<feature type="chain" id="PRO_1000116594" description="LexA repressor">
    <location>
        <begin position="1"/>
        <end position="249"/>
    </location>
</feature>
<feature type="DNA-binding region" description="H-T-H motif" evidence="1">
    <location>
        <begin position="45"/>
        <end position="65"/>
    </location>
</feature>
<feature type="region of interest" description="Disordered" evidence="2">
    <location>
        <begin position="1"/>
        <end position="25"/>
    </location>
</feature>
<feature type="active site" description="For autocatalytic cleavage activity" evidence="1">
    <location>
        <position position="173"/>
    </location>
</feature>
<feature type="active site" description="For autocatalytic cleavage activity" evidence="1">
    <location>
        <position position="210"/>
    </location>
</feature>
<feature type="site" description="Cleavage; by autolysis" evidence="1">
    <location>
        <begin position="138"/>
        <end position="139"/>
    </location>
</feature>
<gene>
    <name evidence="1" type="primary">lexA</name>
    <name type="ordered locus">Achl_1470</name>
</gene>
<keyword id="KW-0068">Autocatalytic cleavage</keyword>
<keyword id="KW-0227">DNA damage</keyword>
<keyword id="KW-0234">DNA repair</keyword>
<keyword id="KW-0235">DNA replication</keyword>
<keyword id="KW-0238">DNA-binding</keyword>
<keyword id="KW-0378">Hydrolase</keyword>
<keyword id="KW-0678">Repressor</keyword>
<keyword id="KW-0742">SOS response</keyword>
<keyword id="KW-0804">Transcription</keyword>
<keyword id="KW-0805">Transcription regulation</keyword>
<comment type="function">
    <text evidence="1">Represses a number of genes involved in the response to DNA damage (SOS response), including recA and lexA. In the presence of single-stranded DNA, RecA interacts with LexA causing an autocatalytic cleavage which disrupts the DNA-binding part of LexA, leading to derepression of the SOS regulon and eventually DNA repair.</text>
</comment>
<comment type="catalytic activity">
    <reaction evidence="1">
        <text>Hydrolysis of Ala-|-Gly bond in repressor LexA.</text>
        <dbReference type="EC" id="3.4.21.88"/>
    </reaction>
</comment>
<comment type="subunit">
    <text evidence="1">Homodimer.</text>
</comment>
<comment type="similarity">
    <text evidence="1">Belongs to the peptidase S24 family.</text>
</comment>
<sequence length="249" mass="26379">MAAAATGGRATSQPKKTTKGLTPRQKKILETIQRSVNVNGYPPSMREIGDTVGLASLSSVTHQLSQLEKLGYLRRDPKRPRAMEVLMPLTLDGGATGRTARQAAEPAAAAAPGITASVTELPTALDTAMVPLVGRIAAGGPILADQVVEDVMPLPRQLVGQGELFMLKVAGDSMVDAAICDGDWVVVRRQADAANGDIVAALLDDEATVKTFRQRDGHTWLLPQNTQYEPILGDHATIMGKVVSVLRSL</sequence>
<protein>
    <recommendedName>
        <fullName evidence="1">LexA repressor</fullName>
        <ecNumber evidence="1">3.4.21.88</ecNumber>
    </recommendedName>
</protein>
<organism>
    <name type="scientific">Pseudarthrobacter chlorophenolicus (strain ATCC 700700 / DSM 12829 / CIP 107037 / JCM 12360 / KCTC 9906 / NCIMB 13794 / A6)</name>
    <name type="common">Arthrobacter chlorophenolicus</name>
    <dbReference type="NCBI Taxonomy" id="452863"/>
    <lineage>
        <taxon>Bacteria</taxon>
        <taxon>Bacillati</taxon>
        <taxon>Actinomycetota</taxon>
        <taxon>Actinomycetes</taxon>
        <taxon>Micrococcales</taxon>
        <taxon>Micrococcaceae</taxon>
        <taxon>Pseudarthrobacter</taxon>
    </lineage>
</organism>
<dbReference type="EC" id="3.4.21.88" evidence="1"/>
<dbReference type="EMBL" id="CP001341">
    <property type="protein sequence ID" value="ACL39459.1"/>
    <property type="molecule type" value="Genomic_DNA"/>
</dbReference>
<dbReference type="RefSeq" id="WP_015936681.1">
    <property type="nucleotide sequence ID" value="NC_011886.1"/>
</dbReference>
<dbReference type="SMR" id="B8HG97"/>
<dbReference type="STRING" id="452863.Achl_1470"/>
<dbReference type="MEROPS" id="S24.001"/>
<dbReference type="KEGG" id="ach:Achl_1470"/>
<dbReference type="eggNOG" id="COG1974">
    <property type="taxonomic scope" value="Bacteria"/>
</dbReference>
<dbReference type="HOGENOM" id="CLU_066192_45_0_11"/>
<dbReference type="OrthoDB" id="9802364at2"/>
<dbReference type="Proteomes" id="UP000002505">
    <property type="component" value="Chromosome"/>
</dbReference>
<dbReference type="GO" id="GO:0003677">
    <property type="term" value="F:DNA binding"/>
    <property type="evidence" value="ECO:0007669"/>
    <property type="project" value="UniProtKB-UniRule"/>
</dbReference>
<dbReference type="GO" id="GO:0004252">
    <property type="term" value="F:serine-type endopeptidase activity"/>
    <property type="evidence" value="ECO:0007669"/>
    <property type="project" value="UniProtKB-UniRule"/>
</dbReference>
<dbReference type="GO" id="GO:0006281">
    <property type="term" value="P:DNA repair"/>
    <property type="evidence" value="ECO:0007669"/>
    <property type="project" value="UniProtKB-UniRule"/>
</dbReference>
<dbReference type="GO" id="GO:0006260">
    <property type="term" value="P:DNA replication"/>
    <property type="evidence" value="ECO:0007669"/>
    <property type="project" value="UniProtKB-UniRule"/>
</dbReference>
<dbReference type="GO" id="GO:0045892">
    <property type="term" value="P:negative regulation of DNA-templated transcription"/>
    <property type="evidence" value="ECO:0007669"/>
    <property type="project" value="UniProtKB-UniRule"/>
</dbReference>
<dbReference type="GO" id="GO:0006508">
    <property type="term" value="P:proteolysis"/>
    <property type="evidence" value="ECO:0007669"/>
    <property type="project" value="InterPro"/>
</dbReference>
<dbReference type="GO" id="GO:0009432">
    <property type="term" value="P:SOS response"/>
    <property type="evidence" value="ECO:0007669"/>
    <property type="project" value="UniProtKB-UniRule"/>
</dbReference>
<dbReference type="CDD" id="cd06529">
    <property type="entry name" value="S24_LexA-like"/>
    <property type="match status" value="1"/>
</dbReference>
<dbReference type="FunFam" id="2.10.109.10:FF:000001">
    <property type="entry name" value="LexA repressor"/>
    <property type="match status" value="1"/>
</dbReference>
<dbReference type="Gene3D" id="2.10.109.10">
    <property type="entry name" value="Umud Fragment, subunit A"/>
    <property type="match status" value="1"/>
</dbReference>
<dbReference type="Gene3D" id="1.10.10.10">
    <property type="entry name" value="Winged helix-like DNA-binding domain superfamily/Winged helix DNA-binding domain"/>
    <property type="match status" value="1"/>
</dbReference>
<dbReference type="HAMAP" id="MF_00015">
    <property type="entry name" value="LexA"/>
    <property type="match status" value="1"/>
</dbReference>
<dbReference type="InterPro" id="IPR006200">
    <property type="entry name" value="LexA"/>
</dbReference>
<dbReference type="InterPro" id="IPR039418">
    <property type="entry name" value="LexA-like"/>
</dbReference>
<dbReference type="InterPro" id="IPR036286">
    <property type="entry name" value="LexA/Signal_pep-like_sf"/>
</dbReference>
<dbReference type="InterPro" id="IPR006199">
    <property type="entry name" value="LexA_DNA-bd_dom"/>
</dbReference>
<dbReference type="InterPro" id="IPR050077">
    <property type="entry name" value="LexA_repressor"/>
</dbReference>
<dbReference type="InterPro" id="IPR006197">
    <property type="entry name" value="Peptidase_S24_LexA"/>
</dbReference>
<dbReference type="InterPro" id="IPR015927">
    <property type="entry name" value="Peptidase_S24_S26A/B/C"/>
</dbReference>
<dbReference type="InterPro" id="IPR036388">
    <property type="entry name" value="WH-like_DNA-bd_sf"/>
</dbReference>
<dbReference type="InterPro" id="IPR036390">
    <property type="entry name" value="WH_DNA-bd_sf"/>
</dbReference>
<dbReference type="NCBIfam" id="TIGR00498">
    <property type="entry name" value="lexA"/>
    <property type="match status" value="1"/>
</dbReference>
<dbReference type="PANTHER" id="PTHR33516">
    <property type="entry name" value="LEXA REPRESSOR"/>
    <property type="match status" value="1"/>
</dbReference>
<dbReference type="PANTHER" id="PTHR33516:SF2">
    <property type="entry name" value="LEXA REPRESSOR-RELATED"/>
    <property type="match status" value="1"/>
</dbReference>
<dbReference type="Pfam" id="PF01726">
    <property type="entry name" value="LexA_DNA_bind"/>
    <property type="match status" value="1"/>
</dbReference>
<dbReference type="Pfam" id="PF00717">
    <property type="entry name" value="Peptidase_S24"/>
    <property type="match status" value="1"/>
</dbReference>
<dbReference type="PRINTS" id="PR00726">
    <property type="entry name" value="LEXASERPTASE"/>
</dbReference>
<dbReference type="SUPFAM" id="SSF51306">
    <property type="entry name" value="LexA/Signal peptidase"/>
    <property type="match status" value="1"/>
</dbReference>
<dbReference type="SUPFAM" id="SSF46785">
    <property type="entry name" value="Winged helix' DNA-binding domain"/>
    <property type="match status" value="1"/>
</dbReference>
<evidence type="ECO:0000255" key="1">
    <source>
        <dbReference type="HAMAP-Rule" id="MF_00015"/>
    </source>
</evidence>
<evidence type="ECO:0000256" key="2">
    <source>
        <dbReference type="SAM" id="MobiDB-lite"/>
    </source>
</evidence>
<name>LEXA_PSECP</name>